<gene>
    <name type="primary">UGT85A7</name>
    <name type="ordered locus">At1g22340</name>
    <name type="ORF">T16E15.5</name>
</gene>
<name>U85A7_ARATH</name>
<evidence type="ECO:0000250" key="1"/>
<evidence type="ECO:0000269" key="2">
    <source>
    </source>
</evidence>
<evidence type="ECO:0000305" key="3"/>
<feature type="chain" id="PRO_0000409130" description="UDP-glycosyltransferase 85A7">
    <location>
        <begin position="1"/>
        <end position="487"/>
    </location>
</feature>
<feature type="binding site" evidence="1">
    <location>
        <begin position="364"/>
        <end position="366"/>
    </location>
    <ligand>
        <name>UDP-alpha-D-glucose</name>
        <dbReference type="ChEBI" id="CHEBI:58885"/>
    </ligand>
</feature>
<feature type="binding site" evidence="1">
    <location>
        <begin position="381"/>
        <end position="389"/>
    </location>
    <ligand>
        <name>UDP-alpha-D-glucose</name>
        <dbReference type="ChEBI" id="CHEBI:58885"/>
    </ligand>
</feature>
<feature type="binding site" evidence="1">
    <location>
        <begin position="403"/>
        <end position="406"/>
    </location>
    <ligand>
        <name>UDP-alpha-D-glucose</name>
        <dbReference type="ChEBI" id="CHEBI:58885"/>
    </ligand>
</feature>
<accession>Q9LME8</accession>
<protein>
    <recommendedName>
        <fullName>UDP-glycosyltransferase 85A7</fullName>
        <ecNumber>2.4.1.-</ecNumber>
    </recommendedName>
</protein>
<organism>
    <name type="scientific">Arabidopsis thaliana</name>
    <name type="common">Mouse-ear cress</name>
    <dbReference type="NCBI Taxonomy" id="3702"/>
    <lineage>
        <taxon>Eukaryota</taxon>
        <taxon>Viridiplantae</taxon>
        <taxon>Streptophyta</taxon>
        <taxon>Embryophyta</taxon>
        <taxon>Tracheophyta</taxon>
        <taxon>Spermatophyta</taxon>
        <taxon>Magnoliopsida</taxon>
        <taxon>eudicotyledons</taxon>
        <taxon>Gunneridae</taxon>
        <taxon>Pentapetalae</taxon>
        <taxon>rosids</taxon>
        <taxon>malvids</taxon>
        <taxon>Brassicales</taxon>
        <taxon>Brassicaceae</taxon>
        <taxon>Camelineae</taxon>
        <taxon>Arabidopsis</taxon>
    </lineage>
</organism>
<comment type="tissue specificity">
    <text evidence="2">Expressed in roots, shoots, leaves and flowers.</text>
</comment>
<comment type="similarity">
    <text evidence="3">Belongs to the UDP-glycosyltransferase family.</text>
</comment>
<sequence length="487" mass="55456">MESHVVHNAQKPHVVCVPYPAQGHINPMLKVAKLLYAKGFHVTFVNTLYNHNRLLRSRGPNALDGFPSFRFESIPDGLPETDGDRTQHTPTVCMSIEKNCLAPFKEILRRINDKDDVPPVSCIVSDGVMSFTLDAAEELGVPEVIFWTNSACGFMTILHFYLFIEKGLSPFKDESYMSKEHLDTVIDWIPSMKNLRLKDIPSYIRTTNPDNIMLNFLIREVERSKRASAIILNTFDELEHDVIQSMQSILPPVYSIGPLHLLVKEEINEASEIGQMGLNLWREEMECLDWLDTKTPNSVLFVNFGCITVMSAKQLEEFAWGLAASRKEFLWVIRPNLVVGEAMVVLPQEFLAETIDRRMLASWCPQEKVLSHPAIGGFLTHCGWNSTLESLAGGVPMICWPCFSEQPTNCKFCCDEWGVGIEIGKDVKREEVETVVRELMDGEKGKKLREKAEEWRRLAEEATRYKHGSSVMNLETLIHKVFLENLR</sequence>
<reference key="1">
    <citation type="journal article" date="2000" name="Nature">
        <title>Sequence and analysis of chromosome 1 of the plant Arabidopsis thaliana.</title>
        <authorList>
            <person name="Theologis A."/>
            <person name="Ecker J.R."/>
            <person name="Palm C.J."/>
            <person name="Federspiel N.A."/>
            <person name="Kaul S."/>
            <person name="White O."/>
            <person name="Alonso J."/>
            <person name="Altafi H."/>
            <person name="Araujo R."/>
            <person name="Bowman C.L."/>
            <person name="Brooks S.Y."/>
            <person name="Buehler E."/>
            <person name="Chan A."/>
            <person name="Chao Q."/>
            <person name="Chen H."/>
            <person name="Cheuk R.F."/>
            <person name="Chin C.W."/>
            <person name="Chung M.K."/>
            <person name="Conn L."/>
            <person name="Conway A.B."/>
            <person name="Conway A.R."/>
            <person name="Creasy T.H."/>
            <person name="Dewar K."/>
            <person name="Dunn P."/>
            <person name="Etgu P."/>
            <person name="Feldblyum T.V."/>
            <person name="Feng J.-D."/>
            <person name="Fong B."/>
            <person name="Fujii C.Y."/>
            <person name="Gill J.E."/>
            <person name="Goldsmith A.D."/>
            <person name="Haas B."/>
            <person name="Hansen N.F."/>
            <person name="Hughes B."/>
            <person name="Huizar L."/>
            <person name="Hunter J.L."/>
            <person name="Jenkins J."/>
            <person name="Johnson-Hopson C."/>
            <person name="Khan S."/>
            <person name="Khaykin E."/>
            <person name="Kim C.J."/>
            <person name="Koo H.L."/>
            <person name="Kremenetskaia I."/>
            <person name="Kurtz D.B."/>
            <person name="Kwan A."/>
            <person name="Lam B."/>
            <person name="Langin-Hooper S."/>
            <person name="Lee A."/>
            <person name="Lee J.M."/>
            <person name="Lenz C.A."/>
            <person name="Li J.H."/>
            <person name="Li Y.-P."/>
            <person name="Lin X."/>
            <person name="Liu S.X."/>
            <person name="Liu Z.A."/>
            <person name="Luros J.S."/>
            <person name="Maiti R."/>
            <person name="Marziali A."/>
            <person name="Militscher J."/>
            <person name="Miranda M."/>
            <person name="Nguyen M."/>
            <person name="Nierman W.C."/>
            <person name="Osborne B.I."/>
            <person name="Pai G."/>
            <person name="Peterson J."/>
            <person name="Pham P.K."/>
            <person name="Rizzo M."/>
            <person name="Rooney T."/>
            <person name="Rowley D."/>
            <person name="Sakano H."/>
            <person name="Salzberg S.L."/>
            <person name="Schwartz J.R."/>
            <person name="Shinn P."/>
            <person name="Southwick A.M."/>
            <person name="Sun H."/>
            <person name="Tallon L.J."/>
            <person name="Tambunga G."/>
            <person name="Toriumi M.J."/>
            <person name="Town C.D."/>
            <person name="Utterback T."/>
            <person name="Van Aken S."/>
            <person name="Vaysberg M."/>
            <person name="Vysotskaia V.S."/>
            <person name="Walker M."/>
            <person name="Wu D."/>
            <person name="Yu G."/>
            <person name="Fraser C.M."/>
            <person name="Venter J.C."/>
            <person name="Davis R.W."/>
        </authorList>
    </citation>
    <scope>NUCLEOTIDE SEQUENCE [LARGE SCALE GENOMIC DNA]</scope>
    <source>
        <strain>cv. Columbia</strain>
    </source>
</reference>
<reference key="2">
    <citation type="journal article" date="2017" name="Plant J.">
        <title>Araport11: a complete reannotation of the Arabidopsis thaliana reference genome.</title>
        <authorList>
            <person name="Cheng C.Y."/>
            <person name="Krishnakumar V."/>
            <person name="Chan A.P."/>
            <person name="Thibaud-Nissen F."/>
            <person name="Schobel S."/>
            <person name="Town C.D."/>
        </authorList>
    </citation>
    <scope>GENOME REANNOTATION</scope>
    <source>
        <strain>cv. Columbia</strain>
    </source>
</reference>
<reference key="3">
    <citation type="journal article" date="2006" name="Plant Biotechnol. J.">
        <title>Simultaneous high-throughput recombinational cloning of open reading frames in closed and open configurations.</title>
        <authorList>
            <person name="Underwood B.A."/>
            <person name="Vanderhaeghen R."/>
            <person name="Whitford R."/>
            <person name="Town C.D."/>
            <person name="Hilson P."/>
        </authorList>
    </citation>
    <scope>NUCLEOTIDE SEQUENCE [LARGE SCALE MRNA]</scope>
    <source>
        <strain>cv. Columbia</strain>
    </source>
</reference>
<reference key="4">
    <citation type="journal article" date="2001" name="J. Biol. Chem.">
        <title>Phylogenetic analysis of the UDP-glycosyltransferase multigene family of Arabidopsis thaliana.</title>
        <authorList>
            <person name="Li Y."/>
            <person name="Baldauf S."/>
            <person name="Lim E.K."/>
            <person name="Bowles D.J."/>
        </authorList>
    </citation>
    <scope>GENE FAMILY</scope>
</reference>
<reference key="5">
    <citation type="journal article" date="2007" name="Genomics">
        <title>Characterization of Arabidopsis AtUGT85A and AtGUS gene families and their expression in rapidly dividing tissues.</title>
        <authorList>
            <person name="Woo H.H."/>
            <person name="Jeong B.R."/>
            <person name="Hirsch A.M."/>
            <person name="Hawes M.C."/>
        </authorList>
    </citation>
    <scope>TISSUE SPECIFICITY</scope>
</reference>
<proteinExistence type="evidence at transcript level"/>
<dbReference type="EC" id="2.4.1.-"/>
<dbReference type="EMBL" id="AC068562">
    <property type="protein sequence ID" value="AAF87257.1"/>
    <property type="molecule type" value="Genomic_DNA"/>
</dbReference>
<dbReference type="EMBL" id="CP002684">
    <property type="protein sequence ID" value="AEE30231.1"/>
    <property type="molecule type" value="Genomic_DNA"/>
</dbReference>
<dbReference type="EMBL" id="DQ446278">
    <property type="protein sequence ID" value="ABE65644.1"/>
    <property type="molecule type" value="mRNA"/>
</dbReference>
<dbReference type="PIR" id="C86356">
    <property type="entry name" value="C86356"/>
</dbReference>
<dbReference type="RefSeq" id="NP_173652.1">
    <property type="nucleotide sequence ID" value="NM_102085.3"/>
</dbReference>
<dbReference type="SMR" id="Q9LME8"/>
<dbReference type="FunCoup" id="Q9LME8">
    <property type="interactions" value="221"/>
</dbReference>
<dbReference type="STRING" id="3702.Q9LME8"/>
<dbReference type="CAZy" id="GT1">
    <property type="family name" value="Glycosyltransferase Family 1"/>
</dbReference>
<dbReference type="iPTMnet" id="Q9LME8"/>
<dbReference type="PaxDb" id="3702-AT1G22340.1"/>
<dbReference type="ProteomicsDB" id="242814"/>
<dbReference type="EnsemblPlants" id="AT1G22340.1">
    <property type="protein sequence ID" value="AT1G22340.1"/>
    <property type="gene ID" value="AT1G22340"/>
</dbReference>
<dbReference type="GeneID" id="838841"/>
<dbReference type="Gramene" id="AT1G22340.1">
    <property type="protein sequence ID" value="AT1G22340.1"/>
    <property type="gene ID" value="AT1G22340"/>
</dbReference>
<dbReference type="KEGG" id="ath:AT1G22340"/>
<dbReference type="Araport" id="AT1G22340"/>
<dbReference type="TAIR" id="AT1G22340">
    <property type="gene designation" value="UGT85A7"/>
</dbReference>
<dbReference type="eggNOG" id="KOG1192">
    <property type="taxonomic scope" value="Eukaryota"/>
</dbReference>
<dbReference type="HOGENOM" id="CLU_001724_0_0_1"/>
<dbReference type="InParanoid" id="Q9LME8"/>
<dbReference type="OMA" id="TINMSLW"/>
<dbReference type="PhylomeDB" id="Q9LME8"/>
<dbReference type="BioCyc" id="ARA:AT1G22340-MONOMER"/>
<dbReference type="PRO" id="PR:Q9LME8"/>
<dbReference type="Proteomes" id="UP000006548">
    <property type="component" value="Chromosome 1"/>
</dbReference>
<dbReference type="ExpressionAtlas" id="Q9LME8">
    <property type="expression patterns" value="baseline and differential"/>
</dbReference>
<dbReference type="GO" id="GO:0005829">
    <property type="term" value="C:cytosol"/>
    <property type="evidence" value="ECO:0007005"/>
    <property type="project" value="TAIR"/>
</dbReference>
<dbReference type="GO" id="GO:0015020">
    <property type="term" value="F:glucuronosyltransferase activity"/>
    <property type="evidence" value="ECO:0000250"/>
    <property type="project" value="TAIR"/>
</dbReference>
<dbReference type="GO" id="GO:0035251">
    <property type="term" value="F:UDP-glucosyltransferase activity"/>
    <property type="evidence" value="ECO:0007669"/>
    <property type="project" value="UniProtKB-ARBA"/>
</dbReference>
<dbReference type="CDD" id="cd03784">
    <property type="entry name" value="GT1_Gtf-like"/>
    <property type="match status" value="1"/>
</dbReference>
<dbReference type="FunFam" id="3.40.50.2000:FF:000027">
    <property type="entry name" value="Glycosyltransferase"/>
    <property type="match status" value="1"/>
</dbReference>
<dbReference type="FunFam" id="3.40.50.2000:FF:000055">
    <property type="entry name" value="Glycosyltransferase"/>
    <property type="match status" value="1"/>
</dbReference>
<dbReference type="Gene3D" id="3.40.50.2000">
    <property type="entry name" value="Glycogen Phosphorylase B"/>
    <property type="match status" value="2"/>
</dbReference>
<dbReference type="InterPro" id="IPR002213">
    <property type="entry name" value="UDP_glucos_trans"/>
</dbReference>
<dbReference type="InterPro" id="IPR035595">
    <property type="entry name" value="UDP_glycos_trans_CS"/>
</dbReference>
<dbReference type="PANTHER" id="PTHR11926">
    <property type="entry name" value="GLUCOSYL/GLUCURONOSYL TRANSFERASES"/>
    <property type="match status" value="1"/>
</dbReference>
<dbReference type="PANTHER" id="PTHR11926:SF774">
    <property type="entry name" value="UDP-GLYCOSYLTRANSFERASE 85A1-RELATED"/>
    <property type="match status" value="1"/>
</dbReference>
<dbReference type="Pfam" id="PF00201">
    <property type="entry name" value="UDPGT"/>
    <property type="match status" value="1"/>
</dbReference>
<dbReference type="SUPFAM" id="SSF53756">
    <property type="entry name" value="UDP-Glycosyltransferase/glycogen phosphorylase"/>
    <property type="match status" value="1"/>
</dbReference>
<dbReference type="PROSITE" id="PS00375">
    <property type="entry name" value="UDPGT"/>
    <property type="match status" value="1"/>
</dbReference>
<keyword id="KW-0328">Glycosyltransferase</keyword>
<keyword id="KW-1185">Reference proteome</keyword>
<keyword id="KW-0808">Transferase</keyword>